<name>RS16_PSEF5</name>
<comment type="similarity">
    <text evidence="1">Belongs to the bacterial ribosomal protein bS16 family.</text>
</comment>
<protein>
    <recommendedName>
        <fullName evidence="1">Small ribosomal subunit protein bS16</fullName>
    </recommendedName>
    <alternativeName>
        <fullName evidence="2">30S ribosomal protein S16</fullName>
    </alternativeName>
</protein>
<evidence type="ECO:0000255" key="1">
    <source>
        <dbReference type="HAMAP-Rule" id="MF_00385"/>
    </source>
</evidence>
<evidence type="ECO:0000305" key="2"/>
<feature type="chain" id="PRO_0000243849" description="Small ribosomal subunit protein bS16">
    <location>
        <begin position="1"/>
        <end position="83"/>
    </location>
</feature>
<keyword id="KW-0687">Ribonucleoprotein</keyword>
<keyword id="KW-0689">Ribosomal protein</keyword>
<gene>
    <name evidence="1" type="primary">rpsP</name>
    <name type="ordered locus">PFL_1094</name>
</gene>
<reference key="1">
    <citation type="journal article" date="2005" name="Nat. Biotechnol.">
        <title>Complete genome sequence of the plant commensal Pseudomonas fluorescens Pf-5.</title>
        <authorList>
            <person name="Paulsen I.T."/>
            <person name="Press C.M."/>
            <person name="Ravel J."/>
            <person name="Kobayashi D.Y."/>
            <person name="Myers G.S.A."/>
            <person name="Mavrodi D.V."/>
            <person name="DeBoy R.T."/>
            <person name="Seshadri R."/>
            <person name="Ren Q."/>
            <person name="Madupu R."/>
            <person name="Dodson R.J."/>
            <person name="Durkin A.S."/>
            <person name="Brinkac L.M."/>
            <person name="Daugherty S.C."/>
            <person name="Sullivan S.A."/>
            <person name="Rosovitz M.J."/>
            <person name="Gwinn M.L."/>
            <person name="Zhou L."/>
            <person name="Schneider D.J."/>
            <person name="Cartinhour S.W."/>
            <person name="Nelson W.C."/>
            <person name="Weidman J."/>
            <person name="Watkins K."/>
            <person name="Tran K."/>
            <person name="Khouri H."/>
            <person name="Pierson E.A."/>
            <person name="Pierson L.S. III"/>
            <person name="Thomashow L.S."/>
            <person name="Loper J.E."/>
        </authorList>
    </citation>
    <scope>NUCLEOTIDE SEQUENCE [LARGE SCALE GENOMIC DNA]</scope>
    <source>
        <strain>ATCC BAA-477 / NRRL B-23932 / Pf-5</strain>
    </source>
</reference>
<accession>Q4KHQ8</accession>
<sequence length="83" mass="9236">MLTIRLALGGSKKRPFYHLTVTDSRNPRDGSHKEQVGFFNPIARGQEVRLSVNQERVAYWLSVGAQPSERVAQLLKESAKAAA</sequence>
<proteinExistence type="inferred from homology"/>
<dbReference type="EMBL" id="CP000076">
    <property type="protein sequence ID" value="AAY90381.1"/>
    <property type="molecule type" value="Genomic_DNA"/>
</dbReference>
<dbReference type="RefSeq" id="WP_007927680.1">
    <property type="nucleotide sequence ID" value="NC_004129.6"/>
</dbReference>
<dbReference type="SMR" id="Q4KHQ8"/>
<dbReference type="STRING" id="220664.PFL_1094"/>
<dbReference type="GeneID" id="93401666"/>
<dbReference type="KEGG" id="pfl:PFL_1094"/>
<dbReference type="eggNOG" id="COG0228">
    <property type="taxonomic scope" value="Bacteria"/>
</dbReference>
<dbReference type="HOGENOM" id="CLU_100590_5_1_6"/>
<dbReference type="Proteomes" id="UP000008540">
    <property type="component" value="Chromosome"/>
</dbReference>
<dbReference type="GO" id="GO:0005737">
    <property type="term" value="C:cytoplasm"/>
    <property type="evidence" value="ECO:0007669"/>
    <property type="project" value="UniProtKB-ARBA"/>
</dbReference>
<dbReference type="GO" id="GO:0015935">
    <property type="term" value="C:small ribosomal subunit"/>
    <property type="evidence" value="ECO:0007669"/>
    <property type="project" value="TreeGrafter"/>
</dbReference>
<dbReference type="GO" id="GO:0003735">
    <property type="term" value="F:structural constituent of ribosome"/>
    <property type="evidence" value="ECO:0007669"/>
    <property type="project" value="InterPro"/>
</dbReference>
<dbReference type="GO" id="GO:0006412">
    <property type="term" value="P:translation"/>
    <property type="evidence" value="ECO:0007669"/>
    <property type="project" value="UniProtKB-UniRule"/>
</dbReference>
<dbReference type="Gene3D" id="3.30.1320.10">
    <property type="match status" value="1"/>
</dbReference>
<dbReference type="HAMAP" id="MF_00385">
    <property type="entry name" value="Ribosomal_bS16"/>
    <property type="match status" value="1"/>
</dbReference>
<dbReference type="InterPro" id="IPR000307">
    <property type="entry name" value="Ribosomal_bS16"/>
</dbReference>
<dbReference type="InterPro" id="IPR023803">
    <property type="entry name" value="Ribosomal_bS16_dom_sf"/>
</dbReference>
<dbReference type="NCBIfam" id="TIGR00002">
    <property type="entry name" value="S16"/>
    <property type="match status" value="1"/>
</dbReference>
<dbReference type="PANTHER" id="PTHR12919">
    <property type="entry name" value="30S RIBOSOMAL PROTEIN S16"/>
    <property type="match status" value="1"/>
</dbReference>
<dbReference type="PANTHER" id="PTHR12919:SF20">
    <property type="entry name" value="SMALL RIBOSOMAL SUBUNIT PROTEIN BS16M"/>
    <property type="match status" value="1"/>
</dbReference>
<dbReference type="Pfam" id="PF00886">
    <property type="entry name" value="Ribosomal_S16"/>
    <property type="match status" value="1"/>
</dbReference>
<dbReference type="SUPFAM" id="SSF54565">
    <property type="entry name" value="Ribosomal protein S16"/>
    <property type="match status" value="1"/>
</dbReference>
<organism>
    <name type="scientific">Pseudomonas fluorescens (strain ATCC BAA-477 / NRRL B-23932 / Pf-5)</name>
    <dbReference type="NCBI Taxonomy" id="220664"/>
    <lineage>
        <taxon>Bacteria</taxon>
        <taxon>Pseudomonadati</taxon>
        <taxon>Pseudomonadota</taxon>
        <taxon>Gammaproteobacteria</taxon>
        <taxon>Pseudomonadales</taxon>
        <taxon>Pseudomonadaceae</taxon>
        <taxon>Pseudomonas</taxon>
    </lineage>
</organism>